<evidence type="ECO:0000250" key="1">
    <source>
        <dbReference type="UniProtKB" id="O35174"/>
    </source>
</evidence>
<evidence type="ECO:0000250" key="2">
    <source>
        <dbReference type="UniProtKB" id="P63142"/>
    </source>
</evidence>
<evidence type="ECO:0000269" key="3">
    <source>
    </source>
</evidence>
<evidence type="ECO:0000305" key="4"/>
<evidence type="ECO:0000312" key="5">
    <source>
        <dbReference type="RGD" id="621525"/>
    </source>
</evidence>
<feature type="chain" id="PRO_0000054086" description="Delayed-rectifier potassium channel regulatory subunit KCNS2">
    <location>
        <begin position="1"/>
        <end position="477"/>
    </location>
</feature>
<feature type="topological domain" description="Cytoplasmic" evidence="2">
    <location>
        <begin position="1"/>
        <end position="184"/>
    </location>
</feature>
<feature type="transmembrane region" description="Helical; Name=Segment S1" evidence="2">
    <location>
        <begin position="185"/>
        <end position="206"/>
    </location>
</feature>
<feature type="topological domain" description="Extracellular" evidence="2">
    <location>
        <begin position="207"/>
        <end position="225"/>
    </location>
</feature>
<feature type="transmembrane region" description="Helical; Name=Segment S2" evidence="2">
    <location>
        <begin position="226"/>
        <end position="248"/>
    </location>
</feature>
<feature type="topological domain" description="Cytoplasmic" evidence="2">
    <location>
        <begin position="249"/>
        <end position="259"/>
    </location>
</feature>
<feature type="transmembrane region" description="Helical; Name=Segment S3" evidence="2">
    <location>
        <begin position="260"/>
        <end position="280"/>
    </location>
</feature>
<feature type="topological domain" description="Extracellular" evidence="2">
    <location>
        <begin position="281"/>
        <end position="290"/>
    </location>
</feature>
<feature type="transmembrane region" description="Helical; Voltage-sensor; Name=Segment S4" evidence="2">
    <location>
        <begin position="291"/>
        <end position="311"/>
    </location>
</feature>
<feature type="topological domain" description="Cytoplasmic" evidence="2">
    <location>
        <begin position="312"/>
        <end position="326"/>
    </location>
</feature>
<feature type="transmembrane region" description="Helical; Name=Segment S5" evidence="2">
    <location>
        <begin position="327"/>
        <end position="348"/>
    </location>
</feature>
<feature type="topological domain" description="Extracellular" evidence="2">
    <location>
        <begin position="349"/>
        <end position="361"/>
    </location>
</feature>
<feature type="intramembrane region" description="Helical; Name=Pore helix" evidence="2">
    <location>
        <begin position="362"/>
        <end position="373"/>
    </location>
</feature>
<feature type="intramembrane region" evidence="2">
    <location>
        <begin position="374"/>
        <end position="381"/>
    </location>
</feature>
<feature type="topological domain" description="Extracellular" evidence="2">
    <location>
        <begin position="382"/>
        <end position="388"/>
    </location>
</feature>
<feature type="transmembrane region" description="Helical; Name=Segment S6" evidence="2">
    <location>
        <begin position="389"/>
        <end position="417"/>
    </location>
</feature>
<feature type="topological domain" description="Cytoplasmic" evidence="2">
    <location>
        <begin position="418"/>
        <end position="477"/>
    </location>
</feature>
<feature type="short sequence motif" description="Selectivity filter" evidence="2">
    <location>
        <begin position="374"/>
        <end position="379"/>
    </location>
</feature>
<reference key="1">
    <citation type="journal article" date="2001" name="Lung">
        <title>Kv channel subunit expression in rat pulmonary arteries.</title>
        <authorList>
            <person name="Davies A.R."/>
            <person name="Kozlowski R.Z."/>
        </authorList>
    </citation>
    <scope>NUCLEOTIDE SEQUENCE [MRNA]</scope>
    <scope>TISSUE SPECIFICITY</scope>
    <source>
        <strain>Wistar</strain>
        <tissue>Brain</tissue>
    </source>
</reference>
<protein>
    <recommendedName>
        <fullName evidence="4">Delayed-rectifier potassium channel regulatory subunit KCNS2</fullName>
    </recommendedName>
    <alternativeName>
        <fullName>Delayed-rectifier K(+) channel alpha subunit 2</fullName>
    </alternativeName>
    <alternativeName>
        <fullName>Delayed-rectifier potassium channel subunit Kv9.2</fullName>
    </alternativeName>
    <alternativeName>
        <fullName>Potassium voltage-gated channel subfamily S member 2</fullName>
    </alternativeName>
</protein>
<organism>
    <name type="scientific">Rattus norvegicus</name>
    <name type="common">Rat</name>
    <dbReference type="NCBI Taxonomy" id="10116"/>
    <lineage>
        <taxon>Eukaryota</taxon>
        <taxon>Metazoa</taxon>
        <taxon>Chordata</taxon>
        <taxon>Craniata</taxon>
        <taxon>Vertebrata</taxon>
        <taxon>Euteleostomi</taxon>
        <taxon>Mammalia</taxon>
        <taxon>Eutheria</taxon>
        <taxon>Euarchontoglires</taxon>
        <taxon>Glires</taxon>
        <taxon>Rodentia</taxon>
        <taxon>Myomorpha</taxon>
        <taxon>Muroidea</taxon>
        <taxon>Muridae</taxon>
        <taxon>Murinae</taxon>
        <taxon>Rattus</taxon>
    </lineage>
</organism>
<keyword id="KW-1003">Cell membrane</keyword>
<keyword id="KW-0407">Ion channel</keyword>
<keyword id="KW-0406">Ion transport</keyword>
<keyword id="KW-0472">Membrane</keyword>
<keyword id="KW-0630">Potassium</keyword>
<keyword id="KW-0631">Potassium channel</keyword>
<keyword id="KW-0633">Potassium transport</keyword>
<keyword id="KW-1185">Reference proteome</keyword>
<keyword id="KW-0812">Transmembrane</keyword>
<keyword id="KW-1133">Transmembrane helix</keyword>
<keyword id="KW-0813">Transport</keyword>
<keyword id="KW-0851">Voltage-gated channel</keyword>
<comment type="function">
    <text evidence="1">Potassium channel regulatory subunit that modulate the delayed rectifier voltage-gated potassium channel activity of KCNB1 and KCNB2 by altering their kinetics, expression levels, and shifting the half-inactivation potential to more polarized values. While it does not form functional channels on its own, it can form functional heterotetrameric channels with KCNB1 and KCNB2. Each regulatory subunit has unique regulatory properties that can lead to extensive inhibition, significant changes in kinetics, and/or substantial shifts in the voltage dependencies of the inactivation process.</text>
</comment>
<comment type="subunit">
    <text evidence="1">Heterotetramer with KCNB1 and KCNB2. Does not form homomultimers.</text>
</comment>
<comment type="subcellular location">
    <subcellularLocation>
        <location evidence="1">Cell membrane</location>
        <topology evidence="1">Multi-pass membrane protein</topology>
    </subcellularLocation>
    <text evidence="1">May not reach the plasma membrane but remain in an intracellular compartment in the absence of KCNB1 or KCNB2.</text>
</comment>
<comment type="tissue specificity">
    <text evidence="3">Detected in brain, lung and in pulmonary arteries (PubMed:11891605).</text>
</comment>
<comment type="domain">
    <text evidence="2">The transmembrane segment S4 functions as a voltage-sensor and is characterized by a series of positively charged amino acids at every third position. Channel opening and closing is effected by a conformation change that affects the position and orientation of the voltage-sensor paddle formed by S3 and S4 within the membrane. A transmembrane electric field that is positive inside would push the positively charged S4 segment outwards, thereby opening the pore, while a field that is negative inside would pull the S4 segment inwards and close the pore. Changes in the position and orientation of S4 are then transmitted to the activation gate formed by the inner helix bundle via the S4-S5 linker region.</text>
</comment>
<comment type="similarity">
    <text evidence="4">Belongs to the potassium channel family. S (TC 1.A.1.2) subfamily. Kv9.2/KCNS2 sub-subfamily.</text>
</comment>
<name>KCNS2_RAT</name>
<accession>Q9ER26</accession>
<proteinExistence type="evidence at transcript level"/>
<gene>
    <name evidence="5" type="primary">Kcns2</name>
</gene>
<sequence length="477" mass="54317">MTRQSLWDLSETDVEDGEIRINVGGFKRRLRSHTLLRFPETRLGRLLLCHSREAILELCDDYDDVQREFYFDRNPELFPYVLHFYHTGKLHVMAELCVFSFSQEIEYWGINEFFIDSCCSYSYHGRKVEPEQEKWDEQSDQESTTSSFDEILAFYNDASKFDGQPLGNFRRQLWLALDNPGYSVLSRVFSVLSILVVLGSIITMCLNSLPDFQIPDSQGNPGEDPRFEIVEHFGIAWFTFELVARFAVAPDFLKFFKNALNLIDLMSIVPFYITLVVNLVVESSPTLANLGRVAQVLRLMRIFRILKLARHSTGLRSLGATLKYSYKEVGLLLLYLSVGISIFSVVAYTIEKEENEGLATIPACWWWATVSMTTVGYGDVVPGTTAGKLTASACILAGILVVVLPITLIFNKFSHFYRRQKQLESAMRSCDFGDGMKEVPSVNLRDYYAHKVKSLMASLTNMSRSSPSELSLDDSLH</sequence>
<dbReference type="EMBL" id="AJ296090">
    <property type="protein sequence ID" value="CAC14912.1"/>
    <property type="molecule type" value="mRNA"/>
</dbReference>
<dbReference type="RefSeq" id="NP_076456.1">
    <property type="nucleotide sequence ID" value="NM_023966.2"/>
</dbReference>
<dbReference type="SMR" id="Q9ER26"/>
<dbReference type="FunCoup" id="Q9ER26">
    <property type="interactions" value="60"/>
</dbReference>
<dbReference type="STRING" id="10116.ENSRNOP00000015707"/>
<dbReference type="PhosphoSitePlus" id="Q9ER26"/>
<dbReference type="PaxDb" id="10116-ENSRNOP00000015707"/>
<dbReference type="ABCD" id="Q9ER26">
    <property type="antibodies" value="1 sequenced antibody"/>
</dbReference>
<dbReference type="Ensembl" id="ENSRNOT00000115427.1">
    <property type="protein sequence ID" value="ENSRNOP00000088336.1"/>
    <property type="gene ID" value="ENSRNOG00000066111.1"/>
</dbReference>
<dbReference type="GeneID" id="66022"/>
<dbReference type="KEGG" id="rno:66022"/>
<dbReference type="UCSC" id="RGD:621525">
    <property type="organism name" value="rat"/>
</dbReference>
<dbReference type="AGR" id="RGD:621525"/>
<dbReference type="CTD" id="3788"/>
<dbReference type="RGD" id="621525">
    <property type="gene designation" value="Kcns2"/>
</dbReference>
<dbReference type="eggNOG" id="KOG3713">
    <property type="taxonomic scope" value="Eukaryota"/>
</dbReference>
<dbReference type="GeneTree" id="ENSGT00940000160344"/>
<dbReference type="HOGENOM" id="CLU_011722_4_1_1"/>
<dbReference type="InParanoid" id="Q9ER26"/>
<dbReference type="OMA" id="PAGCWWC"/>
<dbReference type="OrthoDB" id="296522at2759"/>
<dbReference type="PhylomeDB" id="Q9ER26"/>
<dbReference type="TreeFam" id="TF313103"/>
<dbReference type="Reactome" id="R-RNO-1296072">
    <property type="pathway name" value="Voltage gated Potassium channels"/>
</dbReference>
<dbReference type="PRO" id="PR:Q9ER26"/>
<dbReference type="Proteomes" id="UP000002494">
    <property type="component" value="Chromosome 7"/>
</dbReference>
<dbReference type="Bgee" id="ENSRNOG00000011369">
    <property type="expression patterns" value="Expressed in frontal cortex and 3 other cell types or tissues"/>
</dbReference>
<dbReference type="GO" id="GO:0016020">
    <property type="term" value="C:membrane"/>
    <property type="evidence" value="ECO:0000318"/>
    <property type="project" value="GO_Central"/>
</dbReference>
<dbReference type="GO" id="GO:0048471">
    <property type="term" value="C:perinuclear region of cytoplasm"/>
    <property type="evidence" value="ECO:0000250"/>
    <property type="project" value="UniProtKB"/>
</dbReference>
<dbReference type="GO" id="GO:0005886">
    <property type="term" value="C:plasma membrane"/>
    <property type="evidence" value="ECO:0000250"/>
    <property type="project" value="UniProtKB"/>
</dbReference>
<dbReference type="GO" id="GO:0008076">
    <property type="term" value="C:voltage-gated potassium channel complex"/>
    <property type="evidence" value="ECO:0000250"/>
    <property type="project" value="UniProtKB"/>
</dbReference>
<dbReference type="GO" id="GO:0015459">
    <property type="term" value="F:potassium channel regulator activity"/>
    <property type="evidence" value="ECO:0000250"/>
    <property type="project" value="UniProtKB"/>
</dbReference>
<dbReference type="GO" id="GO:0005249">
    <property type="term" value="F:voltage-gated potassium channel activity"/>
    <property type="evidence" value="ECO:0007669"/>
    <property type="project" value="InterPro"/>
</dbReference>
<dbReference type="GO" id="GO:0001508">
    <property type="term" value="P:action potential"/>
    <property type="evidence" value="ECO:0000318"/>
    <property type="project" value="GO_Central"/>
</dbReference>
<dbReference type="GO" id="GO:0071805">
    <property type="term" value="P:potassium ion transmembrane transport"/>
    <property type="evidence" value="ECO:0000318"/>
    <property type="project" value="GO_Central"/>
</dbReference>
<dbReference type="GO" id="GO:0006813">
    <property type="term" value="P:potassium ion transport"/>
    <property type="evidence" value="ECO:0000250"/>
    <property type="project" value="UniProtKB"/>
</dbReference>
<dbReference type="GO" id="GO:0051260">
    <property type="term" value="P:protein homooligomerization"/>
    <property type="evidence" value="ECO:0007669"/>
    <property type="project" value="InterPro"/>
</dbReference>
<dbReference type="GO" id="GO:1901379">
    <property type="term" value="P:regulation of potassium ion transmembrane transport"/>
    <property type="evidence" value="ECO:0000250"/>
    <property type="project" value="UniProtKB"/>
</dbReference>
<dbReference type="CDD" id="cd18427">
    <property type="entry name" value="BTB_POZ_KCNS2"/>
    <property type="match status" value="1"/>
</dbReference>
<dbReference type="FunFam" id="1.10.287.70:FF:000005">
    <property type="entry name" value="potassium voltage-gated channel subfamily G member 1"/>
    <property type="match status" value="1"/>
</dbReference>
<dbReference type="FunFam" id="1.20.120.350:FF:000029">
    <property type="entry name" value="Potassium voltage-gated channel subfamily S member 2"/>
    <property type="match status" value="1"/>
</dbReference>
<dbReference type="FunFam" id="3.30.710.10:FF:000029">
    <property type="entry name" value="potassium voltage-gated channel subfamily S member 2"/>
    <property type="match status" value="1"/>
</dbReference>
<dbReference type="Gene3D" id="1.10.287.70">
    <property type="match status" value="1"/>
</dbReference>
<dbReference type="Gene3D" id="3.30.710.10">
    <property type="entry name" value="Potassium Channel Kv1.1, Chain A"/>
    <property type="match status" value="1"/>
</dbReference>
<dbReference type="Gene3D" id="1.20.120.350">
    <property type="entry name" value="Voltage-gated potassium channels. Chain C"/>
    <property type="match status" value="1"/>
</dbReference>
<dbReference type="InterPro" id="IPR000210">
    <property type="entry name" value="BTB/POZ_dom"/>
</dbReference>
<dbReference type="InterPro" id="IPR005821">
    <property type="entry name" value="Ion_trans_dom"/>
</dbReference>
<dbReference type="InterPro" id="IPR003968">
    <property type="entry name" value="K_chnl_volt-dep_Kv"/>
</dbReference>
<dbReference type="InterPro" id="IPR003971">
    <property type="entry name" value="K_chnl_volt-dep_Kv5/Kv9"/>
</dbReference>
<dbReference type="InterPro" id="IPR011333">
    <property type="entry name" value="SKP1/BTB/POZ_sf"/>
</dbReference>
<dbReference type="InterPro" id="IPR003131">
    <property type="entry name" value="T1-type_BTB"/>
</dbReference>
<dbReference type="InterPro" id="IPR028325">
    <property type="entry name" value="VG_K_chnl"/>
</dbReference>
<dbReference type="InterPro" id="IPR027359">
    <property type="entry name" value="Volt_channel_dom_sf"/>
</dbReference>
<dbReference type="PANTHER" id="PTHR11537:SF60">
    <property type="entry name" value="POTASSIUM VOLTAGE-GATED CHANNEL SUBFAMILY S MEMBER 2"/>
    <property type="match status" value="1"/>
</dbReference>
<dbReference type="PANTHER" id="PTHR11537">
    <property type="entry name" value="VOLTAGE-GATED POTASSIUM CHANNEL"/>
    <property type="match status" value="1"/>
</dbReference>
<dbReference type="Pfam" id="PF02214">
    <property type="entry name" value="BTB_2"/>
    <property type="match status" value="1"/>
</dbReference>
<dbReference type="Pfam" id="PF00520">
    <property type="entry name" value="Ion_trans"/>
    <property type="match status" value="1"/>
</dbReference>
<dbReference type="PRINTS" id="PR00169">
    <property type="entry name" value="KCHANNEL"/>
</dbReference>
<dbReference type="PRINTS" id="PR01494">
    <property type="entry name" value="KV9CHANNEL"/>
</dbReference>
<dbReference type="PRINTS" id="PR01491">
    <property type="entry name" value="KVCHANNEL"/>
</dbReference>
<dbReference type="SMART" id="SM00225">
    <property type="entry name" value="BTB"/>
    <property type="match status" value="1"/>
</dbReference>
<dbReference type="SUPFAM" id="SSF54695">
    <property type="entry name" value="POZ domain"/>
    <property type="match status" value="1"/>
</dbReference>
<dbReference type="SUPFAM" id="SSF81324">
    <property type="entry name" value="Voltage-gated potassium channels"/>
    <property type="match status" value="1"/>
</dbReference>